<keyword id="KW-0030">Aminoacyl-tRNA synthetase</keyword>
<keyword id="KW-0067">ATP-binding</keyword>
<keyword id="KW-0436">Ligase</keyword>
<keyword id="KW-0479">Metal-binding</keyword>
<keyword id="KW-0547">Nucleotide-binding</keyword>
<keyword id="KW-1185">Reference proteome</keyword>
<keyword id="KW-0862">Zinc</keyword>
<protein>
    <recommendedName>
        <fullName evidence="1">Glutamyl-Q tRNA(Asp) synthetase</fullName>
        <shortName evidence="1">Glu-Q-RSs</shortName>
        <ecNumber evidence="1">6.1.1.-</ecNumber>
    </recommendedName>
</protein>
<gene>
    <name evidence="1" type="primary">gluQ</name>
    <name type="ordered locus">PSPTO_0967</name>
</gene>
<proteinExistence type="inferred from homology"/>
<evidence type="ECO:0000255" key="1">
    <source>
        <dbReference type="HAMAP-Rule" id="MF_01428"/>
    </source>
</evidence>
<dbReference type="EC" id="6.1.1.-" evidence="1"/>
<dbReference type="EMBL" id="AE016853">
    <property type="protein sequence ID" value="AAO54501.1"/>
    <property type="molecule type" value="Genomic_DNA"/>
</dbReference>
<dbReference type="RefSeq" id="NP_790806.1">
    <property type="nucleotide sequence ID" value="NC_004578.1"/>
</dbReference>
<dbReference type="SMR" id="Q888P9"/>
<dbReference type="STRING" id="223283.PSPTO_0967"/>
<dbReference type="GeneID" id="1182596"/>
<dbReference type="KEGG" id="pst:PSPTO_0967"/>
<dbReference type="PATRIC" id="fig|223283.9.peg.977"/>
<dbReference type="eggNOG" id="COG0008">
    <property type="taxonomic scope" value="Bacteria"/>
</dbReference>
<dbReference type="HOGENOM" id="CLU_015768_0_1_6"/>
<dbReference type="OrthoDB" id="9807503at2"/>
<dbReference type="PhylomeDB" id="Q888P9"/>
<dbReference type="Proteomes" id="UP000002515">
    <property type="component" value="Chromosome"/>
</dbReference>
<dbReference type="GO" id="GO:0005829">
    <property type="term" value="C:cytosol"/>
    <property type="evidence" value="ECO:0007669"/>
    <property type="project" value="TreeGrafter"/>
</dbReference>
<dbReference type="GO" id="GO:0005524">
    <property type="term" value="F:ATP binding"/>
    <property type="evidence" value="ECO:0007669"/>
    <property type="project" value="UniProtKB-KW"/>
</dbReference>
<dbReference type="GO" id="GO:0004818">
    <property type="term" value="F:glutamate-tRNA ligase activity"/>
    <property type="evidence" value="ECO:0007669"/>
    <property type="project" value="TreeGrafter"/>
</dbReference>
<dbReference type="GO" id="GO:0008270">
    <property type="term" value="F:zinc ion binding"/>
    <property type="evidence" value="ECO:0007669"/>
    <property type="project" value="UniProtKB-UniRule"/>
</dbReference>
<dbReference type="GO" id="GO:0006424">
    <property type="term" value="P:glutamyl-tRNA aminoacylation"/>
    <property type="evidence" value="ECO:0007669"/>
    <property type="project" value="InterPro"/>
</dbReference>
<dbReference type="GO" id="GO:0006400">
    <property type="term" value="P:tRNA modification"/>
    <property type="evidence" value="ECO:0007669"/>
    <property type="project" value="InterPro"/>
</dbReference>
<dbReference type="FunFam" id="3.40.50.620:FF:000093">
    <property type="entry name" value="Glutamyl-Q tRNA(Asp) synthetase"/>
    <property type="match status" value="1"/>
</dbReference>
<dbReference type="Gene3D" id="3.40.50.620">
    <property type="entry name" value="HUPs"/>
    <property type="match status" value="1"/>
</dbReference>
<dbReference type="HAMAP" id="MF_01428">
    <property type="entry name" value="Glu_Q_tRNA_synth"/>
    <property type="match status" value="1"/>
</dbReference>
<dbReference type="InterPro" id="IPR022380">
    <property type="entry name" value="Glu-Q_tRNA(Asp)_Synthase"/>
</dbReference>
<dbReference type="InterPro" id="IPR000924">
    <property type="entry name" value="Glu/Gln-tRNA-synth"/>
</dbReference>
<dbReference type="InterPro" id="IPR020058">
    <property type="entry name" value="Glu/Gln-tRNA-synth_Ib_cat-dom"/>
</dbReference>
<dbReference type="InterPro" id="IPR049940">
    <property type="entry name" value="GluQ/Sye"/>
</dbReference>
<dbReference type="InterPro" id="IPR014729">
    <property type="entry name" value="Rossmann-like_a/b/a_fold"/>
</dbReference>
<dbReference type="NCBIfam" id="NF004314">
    <property type="entry name" value="PRK05710.1-3"/>
    <property type="match status" value="1"/>
</dbReference>
<dbReference type="NCBIfam" id="TIGR03838">
    <property type="entry name" value="queuosine_YadB"/>
    <property type="match status" value="1"/>
</dbReference>
<dbReference type="PANTHER" id="PTHR43311">
    <property type="entry name" value="GLUTAMATE--TRNA LIGASE"/>
    <property type="match status" value="1"/>
</dbReference>
<dbReference type="PANTHER" id="PTHR43311:SF1">
    <property type="entry name" value="GLUTAMYL-Q TRNA(ASP) SYNTHETASE"/>
    <property type="match status" value="1"/>
</dbReference>
<dbReference type="Pfam" id="PF00749">
    <property type="entry name" value="tRNA-synt_1c"/>
    <property type="match status" value="2"/>
</dbReference>
<dbReference type="PRINTS" id="PR00987">
    <property type="entry name" value="TRNASYNTHGLU"/>
</dbReference>
<dbReference type="SUPFAM" id="SSF52374">
    <property type="entry name" value="Nucleotidylyl transferase"/>
    <property type="match status" value="1"/>
</dbReference>
<name>GLUQ_PSESM</name>
<organism>
    <name type="scientific">Pseudomonas syringae pv. tomato (strain ATCC BAA-871 / DC3000)</name>
    <dbReference type="NCBI Taxonomy" id="223283"/>
    <lineage>
        <taxon>Bacteria</taxon>
        <taxon>Pseudomonadati</taxon>
        <taxon>Pseudomonadota</taxon>
        <taxon>Gammaproteobacteria</taxon>
        <taxon>Pseudomonadales</taxon>
        <taxon>Pseudomonadaceae</taxon>
        <taxon>Pseudomonas</taxon>
    </lineage>
</organism>
<feature type="chain" id="PRO_0000208318" description="Glutamyl-Q tRNA(Asp) synthetase">
    <location>
        <begin position="1"/>
        <end position="295"/>
    </location>
</feature>
<feature type="short sequence motif" description="'HIGH' region">
    <location>
        <begin position="12"/>
        <end position="22"/>
    </location>
</feature>
<feature type="short sequence motif" description="'KMSKS' region">
    <location>
        <begin position="228"/>
        <end position="232"/>
    </location>
</feature>
<feature type="binding site" evidence="1">
    <location>
        <begin position="9"/>
        <end position="13"/>
    </location>
    <ligand>
        <name>L-glutamate</name>
        <dbReference type="ChEBI" id="CHEBI:29985"/>
    </ligand>
</feature>
<feature type="binding site" evidence="1">
    <location>
        <position position="45"/>
    </location>
    <ligand>
        <name>L-glutamate</name>
        <dbReference type="ChEBI" id="CHEBI:29985"/>
    </ligand>
</feature>
<feature type="binding site" evidence="1">
    <location>
        <position position="101"/>
    </location>
    <ligand>
        <name>Zn(2+)</name>
        <dbReference type="ChEBI" id="CHEBI:29105"/>
    </ligand>
</feature>
<feature type="binding site" evidence="1">
    <location>
        <position position="103"/>
    </location>
    <ligand>
        <name>Zn(2+)</name>
        <dbReference type="ChEBI" id="CHEBI:29105"/>
    </ligand>
</feature>
<feature type="binding site" evidence="1">
    <location>
        <position position="115"/>
    </location>
    <ligand>
        <name>Zn(2+)</name>
        <dbReference type="ChEBI" id="CHEBI:29105"/>
    </ligand>
</feature>
<feature type="binding site" evidence="1">
    <location>
        <position position="119"/>
    </location>
    <ligand>
        <name>Zn(2+)</name>
        <dbReference type="ChEBI" id="CHEBI:29105"/>
    </ligand>
</feature>
<feature type="binding site" evidence="1">
    <location>
        <position position="172"/>
    </location>
    <ligand>
        <name>L-glutamate</name>
        <dbReference type="ChEBI" id="CHEBI:29985"/>
    </ligand>
</feature>
<feature type="binding site" evidence="1">
    <location>
        <position position="190"/>
    </location>
    <ligand>
        <name>L-glutamate</name>
        <dbReference type="ChEBI" id="CHEBI:29985"/>
    </ligand>
</feature>
<feature type="binding site" evidence="1">
    <location>
        <position position="231"/>
    </location>
    <ligand>
        <name>ATP</name>
        <dbReference type="ChEBI" id="CHEBI:30616"/>
    </ligand>
</feature>
<reference key="1">
    <citation type="journal article" date="2003" name="Proc. Natl. Acad. Sci. U.S.A.">
        <title>The complete genome sequence of the Arabidopsis and tomato pathogen Pseudomonas syringae pv. tomato DC3000.</title>
        <authorList>
            <person name="Buell C.R."/>
            <person name="Joardar V."/>
            <person name="Lindeberg M."/>
            <person name="Selengut J."/>
            <person name="Paulsen I.T."/>
            <person name="Gwinn M.L."/>
            <person name="Dodson R.J."/>
            <person name="DeBoy R.T."/>
            <person name="Durkin A.S."/>
            <person name="Kolonay J.F."/>
            <person name="Madupu R."/>
            <person name="Daugherty S.C."/>
            <person name="Brinkac L.M."/>
            <person name="Beanan M.J."/>
            <person name="Haft D.H."/>
            <person name="Nelson W.C."/>
            <person name="Davidsen T.M."/>
            <person name="Zafar N."/>
            <person name="Zhou L."/>
            <person name="Liu J."/>
            <person name="Yuan Q."/>
            <person name="Khouri H.M."/>
            <person name="Fedorova N.B."/>
            <person name="Tran B."/>
            <person name="Russell D."/>
            <person name="Berry K.J."/>
            <person name="Utterback T.R."/>
            <person name="Van Aken S.E."/>
            <person name="Feldblyum T.V."/>
            <person name="D'Ascenzo M."/>
            <person name="Deng W.-L."/>
            <person name="Ramos A.R."/>
            <person name="Alfano J.R."/>
            <person name="Cartinhour S."/>
            <person name="Chatterjee A.K."/>
            <person name="Delaney T.P."/>
            <person name="Lazarowitz S.G."/>
            <person name="Martin G.B."/>
            <person name="Schneider D.J."/>
            <person name="Tang X."/>
            <person name="Bender C.L."/>
            <person name="White O."/>
            <person name="Fraser C.M."/>
            <person name="Collmer A."/>
        </authorList>
    </citation>
    <scope>NUCLEOTIDE SEQUENCE [LARGE SCALE GENOMIC DNA]</scope>
    <source>
        <strain>ATCC BAA-871 / DC3000</strain>
    </source>
</reference>
<accession>Q888P9</accession>
<sequence length="295" mass="33236">MKKPAYIGRFAPTPSGYLHFGSLVAALASYLDARAVGGQWLLRMEDLDPPREVAGAQVAILETLERYGFEWDGEMVRQSERHDAYADILQRWFNHGLAYACTCSRKQLEAFEGVYPGFCRDAGHAAENAAIRIRVPELEYRFEDRVQGTFHMHLGRESGDFVIRRRDGLYAYQLAVVIDDAWQGVTDIVRGADLLDSTPRHLYLQELLGLPQPRYLHVPLITQPDGHKLGKSYRSPPLPADQATPLLLRALRALGQPVDAHMADGTAQEVLAWGIRHWNASLIPRQRTIEEARIA</sequence>
<comment type="function">
    <text evidence="1">Catalyzes the tRNA-independent activation of glutamate in presence of ATP and the subsequent transfer of glutamate onto a tRNA(Asp). Glutamate is transferred on the 2-amino-5-(4,5-dihydroxy-2-cyclopenten-1-yl) moiety of the queuosine in the wobble position of the QUC anticodon.</text>
</comment>
<comment type="cofactor">
    <cofactor evidence="1">
        <name>Zn(2+)</name>
        <dbReference type="ChEBI" id="CHEBI:29105"/>
    </cofactor>
    <text evidence="1">Binds 1 zinc ion per subunit.</text>
</comment>
<comment type="similarity">
    <text evidence="1">Belongs to the class-I aminoacyl-tRNA synthetase family. GluQ subfamily.</text>
</comment>